<keyword id="KW-0648">Protein biosynthesis</keyword>
<keyword id="KW-0808">Transferase</keyword>
<gene>
    <name evidence="1" type="primary">fmt</name>
    <name type="ordered locus">amb0242</name>
</gene>
<reference key="1">
    <citation type="journal article" date="2005" name="DNA Res.">
        <title>Complete genome sequence of the facultative anaerobic magnetotactic bacterium Magnetospirillum sp. strain AMB-1.</title>
        <authorList>
            <person name="Matsunaga T."/>
            <person name="Okamura Y."/>
            <person name="Fukuda Y."/>
            <person name="Wahyudi A.T."/>
            <person name="Murase Y."/>
            <person name="Takeyama H."/>
        </authorList>
    </citation>
    <scope>NUCLEOTIDE SEQUENCE [LARGE SCALE GENOMIC DNA]</scope>
    <source>
        <strain>ATCC 700264 / AMB-1</strain>
    </source>
</reference>
<feature type="chain" id="PRO_1000020095" description="Methionyl-tRNA formyltransferase">
    <location>
        <begin position="1"/>
        <end position="305"/>
    </location>
</feature>
<feature type="binding site" evidence="1">
    <location>
        <begin position="109"/>
        <end position="112"/>
    </location>
    <ligand>
        <name>(6S)-5,6,7,8-tetrahydrofolate</name>
        <dbReference type="ChEBI" id="CHEBI:57453"/>
    </ligand>
</feature>
<dbReference type="EC" id="2.1.2.9" evidence="1"/>
<dbReference type="EMBL" id="AP007255">
    <property type="protein sequence ID" value="BAE49046.1"/>
    <property type="molecule type" value="Genomic_DNA"/>
</dbReference>
<dbReference type="RefSeq" id="WP_011382689.1">
    <property type="nucleotide sequence ID" value="NC_007626.1"/>
</dbReference>
<dbReference type="SMR" id="Q2WAS9"/>
<dbReference type="STRING" id="342108.amb0242"/>
<dbReference type="KEGG" id="mag:amb0242"/>
<dbReference type="HOGENOM" id="CLU_033347_1_2_5"/>
<dbReference type="OrthoDB" id="9802815at2"/>
<dbReference type="Proteomes" id="UP000007058">
    <property type="component" value="Chromosome"/>
</dbReference>
<dbReference type="GO" id="GO:0005829">
    <property type="term" value="C:cytosol"/>
    <property type="evidence" value="ECO:0007669"/>
    <property type="project" value="TreeGrafter"/>
</dbReference>
<dbReference type="GO" id="GO:0004479">
    <property type="term" value="F:methionyl-tRNA formyltransferase activity"/>
    <property type="evidence" value="ECO:0007669"/>
    <property type="project" value="UniProtKB-UniRule"/>
</dbReference>
<dbReference type="CDD" id="cd08646">
    <property type="entry name" value="FMT_core_Met-tRNA-FMT_N"/>
    <property type="match status" value="1"/>
</dbReference>
<dbReference type="CDD" id="cd08704">
    <property type="entry name" value="Met_tRNA_FMT_C"/>
    <property type="match status" value="1"/>
</dbReference>
<dbReference type="Gene3D" id="3.40.50.12230">
    <property type="match status" value="1"/>
</dbReference>
<dbReference type="HAMAP" id="MF_00182">
    <property type="entry name" value="Formyl_trans"/>
    <property type="match status" value="1"/>
</dbReference>
<dbReference type="InterPro" id="IPR005794">
    <property type="entry name" value="Fmt"/>
</dbReference>
<dbReference type="InterPro" id="IPR005793">
    <property type="entry name" value="Formyl_trans_C"/>
</dbReference>
<dbReference type="InterPro" id="IPR002376">
    <property type="entry name" value="Formyl_transf_N"/>
</dbReference>
<dbReference type="InterPro" id="IPR036477">
    <property type="entry name" value="Formyl_transf_N_sf"/>
</dbReference>
<dbReference type="InterPro" id="IPR011034">
    <property type="entry name" value="Formyl_transferase-like_C_sf"/>
</dbReference>
<dbReference type="InterPro" id="IPR001555">
    <property type="entry name" value="GART_AS"/>
</dbReference>
<dbReference type="InterPro" id="IPR044135">
    <property type="entry name" value="Met-tRNA-FMT_C"/>
</dbReference>
<dbReference type="InterPro" id="IPR041711">
    <property type="entry name" value="Met-tRNA-FMT_N"/>
</dbReference>
<dbReference type="NCBIfam" id="TIGR00460">
    <property type="entry name" value="fmt"/>
    <property type="match status" value="1"/>
</dbReference>
<dbReference type="PANTHER" id="PTHR11138">
    <property type="entry name" value="METHIONYL-TRNA FORMYLTRANSFERASE"/>
    <property type="match status" value="1"/>
</dbReference>
<dbReference type="PANTHER" id="PTHR11138:SF5">
    <property type="entry name" value="METHIONYL-TRNA FORMYLTRANSFERASE, MITOCHONDRIAL"/>
    <property type="match status" value="1"/>
</dbReference>
<dbReference type="Pfam" id="PF02911">
    <property type="entry name" value="Formyl_trans_C"/>
    <property type="match status" value="1"/>
</dbReference>
<dbReference type="Pfam" id="PF00551">
    <property type="entry name" value="Formyl_trans_N"/>
    <property type="match status" value="1"/>
</dbReference>
<dbReference type="SUPFAM" id="SSF50486">
    <property type="entry name" value="FMT C-terminal domain-like"/>
    <property type="match status" value="1"/>
</dbReference>
<dbReference type="SUPFAM" id="SSF53328">
    <property type="entry name" value="Formyltransferase"/>
    <property type="match status" value="1"/>
</dbReference>
<dbReference type="PROSITE" id="PS00373">
    <property type="entry name" value="GART"/>
    <property type="match status" value="1"/>
</dbReference>
<evidence type="ECO:0000255" key="1">
    <source>
        <dbReference type="HAMAP-Rule" id="MF_00182"/>
    </source>
</evidence>
<proteinExistence type="inferred from homology"/>
<sequence length="305" mass="32616">MKLVFMGTPDFSVPILDSLIEAGHQVICVYSQPPRPAGRGHKEQLTPVHAFAHERGIPVRTPKSLKPAEAQAEFAALEADVAVVAAYGLILPQAVLDAPRLGCLNVHASLLPRWRGAAPIQRAILAGDAETGITIMQMDAGLDTGAMLSRESILLAPDTTAPWLHDMLAAMGARMIVETLARLEDDEPPAATPQPAEGVTYAHKLAKEEGLLDWRRNAVELDRKVRALNPWPGVWFEMAGERIKVLEAAVTPGSGAPGTVLDDQLTIACGKFALRPLKVQRAGKAPMTASEMLRGHAIPKGTVLG</sequence>
<organism>
    <name type="scientific">Paramagnetospirillum magneticum (strain ATCC 700264 / AMB-1)</name>
    <name type="common">Magnetospirillum magneticum</name>
    <dbReference type="NCBI Taxonomy" id="342108"/>
    <lineage>
        <taxon>Bacteria</taxon>
        <taxon>Pseudomonadati</taxon>
        <taxon>Pseudomonadota</taxon>
        <taxon>Alphaproteobacteria</taxon>
        <taxon>Rhodospirillales</taxon>
        <taxon>Magnetospirillaceae</taxon>
        <taxon>Paramagnetospirillum</taxon>
    </lineage>
</organism>
<comment type="function">
    <text evidence="1">Attaches a formyl group to the free amino group of methionyl-tRNA(fMet). The formyl group appears to play a dual role in the initiator identity of N-formylmethionyl-tRNA by promoting its recognition by IF2 and preventing the misappropriation of this tRNA by the elongation apparatus.</text>
</comment>
<comment type="catalytic activity">
    <reaction evidence="1">
        <text>L-methionyl-tRNA(fMet) + (6R)-10-formyltetrahydrofolate = N-formyl-L-methionyl-tRNA(fMet) + (6S)-5,6,7,8-tetrahydrofolate + H(+)</text>
        <dbReference type="Rhea" id="RHEA:24380"/>
        <dbReference type="Rhea" id="RHEA-COMP:9952"/>
        <dbReference type="Rhea" id="RHEA-COMP:9953"/>
        <dbReference type="ChEBI" id="CHEBI:15378"/>
        <dbReference type="ChEBI" id="CHEBI:57453"/>
        <dbReference type="ChEBI" id="CHEBI:78530"/>
        <dbReference type="ChEBI" id="CHEBI:78844"/>
        <dbReference type="ChEBI" id="CHEBI:195366"/>
        <dbReference type="EC" id="2.1.2.9"/>
    </reaction>
</comment>
<comment type="similarity">
    <text evidence="1">Belongs to the Fmt family.</text>
</comment>
<accession>Q2WAS9</accession>
<protein>
    <recommendedName>
        <fullName evidence="1">Methionyl-tRNA formyltransferase</fullName>
        <ecNumber evidence="1">2.1.2.9</ecNumber>
    </recommendedName>
</protein>
<name>FMT_PARM1</name>